<reference key="1">
    <citation type="journal article" date="2007" name="J. Bacteriol.">
        <title>Complete genome sequence of Haemophilus somnus (Histophilus somni) strain 129Pt and comparison to Haemophilus ducreyi 35000HP and Haemophilus influenzae Rd.</title>
        <authorList>
            <person name="Challacombe J.F."/>
            <person name="Duncan A.J."/>
            <person name="Brettin T.S."/>
            <person name="Bruce D."/>
            <person name="Chertkov O."/>
            <person name="Detter J.C."/>
            <person name="Han C.S."/>
            <person name="Misra M."/>
            <person name="Richardson P."/>
            <person name="Tapia R."/>
            <person name="Thayer N."/>
            <person name="Xie G."/>
            <person name="Inzana T.J."/>
        </authorList>
    </citation>
    <scope>NUCLEOTIDE SEQUENCE [LARGE SCALE GENOMIC DNA]</scope>
    <source>
        <strain>129Pt</strain>
    </source>
</reference>
<feature type="chain" id="PRO_1000015144" description="Cell division protein ZipA">
    <location>
        <begin position="1"/>
        <end position="335"/>
    </location>
</feature>
<feature type="topological domain" description="Periplasmic" evidence="1">
    <location>
        <begin position="1"/>
        <end position="4"/>
    </location>
</feature>
<feature type="transmembrane region" description="Helical" evidence="1">
    <location>
        <begin position="5"/>
        <end position="25"/>
    </location>
</feature>
<feature type="topological domain" description="Cytoplasmic" evidence="1">
    <location>
        <begin position="26"/>
        <end position="335"/>
    </location>
</feature>
<comment type="function">
    <text evidence="1">Essential cell division protein that stabilizes the FtsZ protofilaments by cross-linking them and that serves as a cytoplasmic membrane anchor for the Z ring. Also required for the recruitment to the septal ring of downstream cell division proteins.</text>
</comment>
<comment type="subunit">
    <text evidence="1">Interacts with FtsZ via their C-terminal domains.</text>
</comment>
<comment type="subcellular location">
    <subcellularLocation>
        <location evidence="1">Cell inner membrane</location>
        <topology evidence="1">Single-pass type I membrane protein</topology>
    </subcellularLocation>
    <text evidence="1">Localizes to the Z ring in an FtsZ-dependent manner.</text>
</comment>
<comment type="similarity">
    <text evidence="1">Belongs to the ZipA family.</text>
</comment>
<keyword id="KW-0131">Cell cycle</keyword>
<keyword id="KW-0132">Cell division</keyword>
<keyword id="KW-0997">Cell inner membrane</keyword>
<keyword id="KW-1003">Cell membrane</keyword>
<keyword id="KW-0472">Membrane</keyword>
<keyword id="KW-0812">Transmembrane</keyword>
<keyword id="KW-1133">Transmembrane helix</keyword>
<sequence>MDLNAILIILGVIALIILVAHGIWSNRCEKSQYFENSKNFTREARIREPQENQQYQTADQSQSDFQRNLLETDNDCFSSESAHNSHQPLYHYSEQSAVQSVDQIKIRLPDSEPNYVMQERFSPKHTDYASMSIEELEKSIDLDEGINSSSQHLRQELAQISGQSIADDKVNIEEHMFTESTISFVEPQTNTESQQVVEKTKSGNSSFIMLYVVASENQGFSGLQLTKTLDELGFIFGKKQIYHRHVDLSITSPVLFSVANIEQPGTFDLTNIADFYTVGIALFMQSPSYGNATANLRMMIRAAKTIAQDLDGVVVTEQQEIFDEQAERDYLARVS</sequence>
<organism>
    <name type="scientific">Histophilus somni (strain 129Pt)</name>
    <name type="common">Haemophilus somnus</name>
    <dbReference type="NCBI Taxonomy" id="205914"/>
    <lineage>
        <taxon>Bacteria</taxon>
        <taxon>Pseudomonadati</taxon>
        <taxon>Pseudomonadota</taxon>
        <taxon>Gammaproteobacteria</taxon>
        <taxon>Pasteurellales</taxon>
        <taxon>Pasteurellaceae</taxon>
        <taxon>Histophilus</taxon>
    </lineage>
</organism>
<accession>Q0I2I2</accession>
<evidence type="ECO:0000255" key="1">
    <source>
        <dbReference type="HAMAP-Rule" id="MF_00509"/>
    </source>
</evidence>
<dbReference type="EMBL" id="CP000436">
    <property type="protein sequence ID" value="ABI24649.1"/>
    <property type="molecule type" value="Genomic_DNA"/>
</dbReference>
<dbReference type="SMR" id="Q0I2I2"/>
<dbReference type="KEGG" id="hso:HS_0371"/>
<dbReference type="eggNOG" id="COG3115">
    <property type="taxonomic scope" value="Bacteria"/>
</dbReference>
<dbReference type="HOGENOM" id="CLU_030174_1_0_6"/>
<dbReference type="GO" id="GO:0032153">
    <property type="term" value="C:cell division site"/>
    <property type="evidence" value="ECO:0007669"/>
    <property type="project" value="UniProtKB-UniRule"/>
</dbReference>
<dbReference type="GO" id="GO:0005886">
    <property type="term" value="C:plasma membrane"/>
    <property type="evidence" value="ECO:0007669"/>
    <property type="project" value="UniProtKB-SubCell"/>
</dbReference>
<dbReference type="GO" id="GO:0000917">
    <property type="term" value="P:division septum assembly"/>
    <property type="evidence" value="ECO:0007669"/>
    <property type="project" value="TreeGrafter"/>
</dbReference>
<dbReference type="GO" id="GO:0043093">
    <property type="term" value="P:FtsZ-dependent cytokinesis"/>
    <property type="evidence" value="ECO:0007669"/>
    <property type="project" value="UniProtKB-UniRule"/>
</dbReference>
<dbReference type="Gene3D" id="3.30.1400.10">
    <property type="entry name" value="ZipA, C-terminal FtsZ-binding domain"/>
    <property type="match status" value="1"/>
</dbReference>
<dbReference type="HAMAP" id="MF_00509">
    <property type="entry name" value="ZipA"/>
    <property type="match status" value="1"/>
</dbReference>
<dbReference type="InterPro" id="IPR011919">
    <property type="entry name" value="Cell_div_ZipA"/>
</dbReference>
<dbReference type="InterPro" id="IPR007449">
    <property type="entry name" value="ZipA_FtsZ-bd_C"/>
</dbReference>
<dbReference type="InterPro" id="IPR036765">
    <property type="entry name" value="ZipA_FtsZ-bd_C_sf"/>
</dbReference>
<dbReference type="NCBIfam" id="TIGR02205">
    <property type="entry name" value="septum_zipA"/>
    <property type="match status" value="1"/>
</dbReference>
<dbReference type="PANTHER" id="PTHR38685">
    <property type="entry name" value="CELL DIVISION PROTEIN ZIPA"/>
    <property type="match status" value="1"/>
</dbReference>
<dbReference type="PANTHER" id="PTHR38685:SF1">
    <property type="entry name" value="CELL DIVISION PROTEIN ZIPA"/>
    <property type="match status" value="1"/>
</dbReference>
<dbReference type="Pfam" id="PF04354">
    <property type="entry name" value="ZipA_C"/>
    <property type="match status" value="1"/>
</dbReference>
<dbReference type="SMART" id="SM00771">
    <property type="entry name" value="ZipA_C"/>
    <property type="match status" value="1"/>
</dbReference>
<dbReference type="SUPFAM" id="SSF64383">
    <property type="entry name" value="Cell-division protein ZipA, C-terminal domain"/>
    <property type="match status" value="1"/>
</dbReference>
<gene>
    <name evidence="1" type="primary">zipA</name>
    <name type="ordered locus">HS_0371</name>
</gene>
<protein>
    <recommendedName>
        <fullName evidence="1">Cell division protein ZipA</fullName>
    </recommendedName>
</protein>
<proteinExistence type="inferred from homology"/>
<name>ZIPA_HISS1</name>